<accession>Q21WM8</accession>
<sequence>MVELAAATCLHECGLPQAWCKQEAWRILETRFGQGLHFLTTWQAWRNDPQRPRMLHYVAVTAAPPDIDELLAGMASSPELLLLAKELAPQCLGLSTGFQRLTFDGGHVLLTLCVGDLTAMLRAQQFAADSIYLTPDPTDCPDRCAASNWRVWTAKALARCCRRGTTLVAPVDADHLYADLTQCGFELSTIQAGQPTGPEAAPTNISLRAQFNPRWTIKNTRNTLPARAMAVSSCAVIGAGLAGASVAASLARRGWQVQVLDQAHTPAAGASGLPVGLVVPHVSADDCVLSRLSRSGVRLMLQQARSLLRQGQDWDATGVLERRLDGPPGVPDIWHPQAAWLKPTQLVRAWLAQLGITFQGDAKVAALRQRGDEWELLDTDGGMLHRASRVVFANAGGAMALLDTLQARLPALNIRVNQFPVMQGVRGQVSWAMHTGLPDETFPPFPINGAGSIVPWVPVDEDCGQNLAWFVGASYQPDSQPPAPDEKNHATNLARLHKLSPKLGQALAGKFAAGAVNAWKNTRCVTADRLPAVGPLDQVDHPGLWMCAGMGSRGLSFSMLCAELLAARWSGEPLPIDAGLARTLEARRGADCHRNRLDRSPELPVSCAP</sequence>
<evidence type="ECO:0000250" key="1"/>
<evidence type="ECO:0000305" key="2"/>
<organism>
    <name type="scientific">Albidiferax ferrireducens (strain ATCC BAA-621 / DSM 15236 / T118)</name>
    <name type="common">Rhodoferax ferrireducens</name>
    <dbReference type="NCBI Taxonomy" id="338969"/>
    <lineage>
        <taxon>Bacteria</taxon>
        <taxon>Pseudomonadati</taxon>
        <taxon>Pseudomonadota</taxon>
        <taxon>Betaproteobacteria</taxon>
        <taxon>Burkholderiales</taxon>
        <taxon>Comamonadaceae</taxon>
        <taxon>Rhodoferax</taxon>
    </lineage>
</organism>
<reference key="1">
    <citation type="submission" date="2006-02" db="EMBL/GenBank/DDBJ databases">
        <title>Complete sequence of chromosome of Rhodoferax ferrireducens DSM 15236.</title>
        <authorList>
            <person name="Copeland A."/>
            <person name="Lucas S."/>
            <person name="Lapidus A."/>
            <person name="Barry K."/>
            <person name="Detter J.C."/>
            <person name="Glavina del Rio T."/>
            <person name="Hammon N."/>
            <person name="Israni S."/>
            <person name="Pitluck S."/>
            <person name="Brettin T."/>
            <person name="Bruce D."/>
            <person name="Han C."/>
            <person name="Tapia R."/>
            <person name="Gilna P."/>
            <person name="Kiss H."/>
            <person name="Schmutz J."/>
            <person name="Larimer F."/>
            <person name="Land M."/>
            <person name="Kyrpides N."/>
            <person name="Ivanova N."/>
            <person name="Richardson P."/>
        </authorList>
    </citation>
    <scope>NUCLEOTIDE SEQUENCE [LARGE SCALE GENOMIC DNA]</scope>
    <source>
        <strain>ATCC BAA-621 / DSM 15236 / T118</strain>
    </source>
</reference>
<name>MNMC_ALBFT</name>
<comment type="function">
    <text evidence="1">Catalyzes the last two steps in the biosynthesis of 5-methylaminomethyl-2-thiouridine (mnm(5)s(2)U) at the wobble position (U34) in tRNA. Catalyzes the FAD-dependent demodification of cmnm(5)s(2)U34 to nm(5)s(2)U34, followed by the transfer of a methyl group from S-adenosyl-L-methionine to nm(5)s(2)U34, to form mnm(5)s(2)U34 (By similarity).</text>
</comment>
<comment type="catalytic activity">
    <reaction>
        <text>5-aminomethyl-2-thiouridine(34) in tRNA + S-adenosyl-L-methionine = 5-methylaminomethyl-2-thiouridine(34) in tRNA + S-adenosyl-L-homocysteine + H(+)</text>
        <dbReference type="Rhea" id="RHEA:19569"/>
        <dbReference type="Rhea" id="RHEA-COMP:10195"/>
        <dbReference type="Rhea" id="RHEA-COMP:10197"/>
        <dbReference type="ChEBI" id="CHEBI:15378"/>
        <dbReference type="ChEBI" id="CHEBI:57856"/>
        <dbReference type="ChEBI" id="CHEBI:59789"/>
        <dbReference type="ChEBI" id="CHEBI:74454"/>
        <dbReference type="ChEBI" id="CHEBI:74455"/>
        <dbReference type="EC" id="2.1.1.61"/>
    </reaction>
</comment>
<comment type="cofactor">
    <cofactor evidence="1">
        <name>FAD</name>
        <dbReference type="ChEBI" id="CHEBI:57692"/>
    </cofactor>
</comment>
<comment type="subcellular location">
    <subcellularLocation>
        <location evidence="2">Cytoplasm</location>
    </subcellularLocation>
</comment>
<comment type="similarity">
    <text evidence="2">In the N-terminal section; belongs to the methyltransferase superfamily. tRNA (mnm(5)s(2)U34)-methyltransferase family.</text>
</comment>
<comment type="similarity">
    <text evidence="2">In the C-terminal section; belongs to the DAO family.</text>
</comment>
<gene>
    <name type="primary">mnmC</name>
    <name type="ordered locus">Rfer_2101</name>
</gene>
<proteinExistence type="inferred from homology"/>
<feature type="chain" id="PRO_0000348019" description="tRNA 5-methylaminomethyl-2-thiouridine biosynthesis bifunctional protein MnmC">
    <location>
        <begin position="1"/>
        <end position="609"/>
    </location>
</feature>
<feature type="region of interest" description="tRNA (mnm(5)s(2)U34)-methyltransferase">
    <location>
        <begin position="1"/>
        <end position="229"/>
    </location>
</feature>
<feature type="region of interest" description="FAD-dependent cmnm(5)s(2)U34 oxidoreductase">
    <location>
        <begin position="237"/>
        <end position="609"/>
    </location>
</feature>
<dbReference type="EC" id="2.1.1.61"/>
<dbReference type="EC" id="1.5.-.-"/>
<dbReference type="EMBL" id="CP000267">
    <property type="protein sequence ID" value="ABD69825.1"/>
    <property type="molecule type" value="Genomic_DNA"/>
</dbReference>
<dbReference type="RefSeq" id="WP_011464393.1">
    <property type="nucleotide sequence ID" value="NC_007908.1"/>
</dbReference>
<dbReference type="SMR" id="Q21WM8"/>
<dbReference type="STRING" id="338969.Rfer_2101"/>
<dbReference type="KEGG" id="rfr:Rfer_2101"/>
<dbReference type="eggNOG" id="COG0665">
    <property type="taxonomic scope" value="Bacteria"/>
</dbReference>
<dbReference type="eggNOG" id="COG4121">
    <property type="taxonomic scope" value="Bacteria"/>
</dbReference>
<dbReference type="HOGENOM" id="CLU_022427_1_0_4"/>
<dbReference type="OrthoDB" id="9786494at2"/>
<dbReference type="Proteomes" id="UP000008332">
    <property type="component" value="Chromosome"/>
</dbReference>
<dbReference type="GO" id="GO:0005737">
    <property type="term" value="C:cytoplasm"/>
    <property type="evidence" value="ECO:0007669"/>
    <property type="project" value="UniProtKB-SubCell"/>
</dbReference>
<dbReference type="GO" id="GO:0016645">
    <property type="term" value="F:oxidoreductase activity, acting on the CH-NH group of donors"/>
    <property type="evidence" value="ECO:0007669"/>
    <property type="project" value="InterPro"/>
</dbReference>
<dbReference type="GO" id="GO:0004808">
    <property type="term" value="F:tRNA (5-methylaminomethyl-2-thiouridylate)(34)-methyltransferase activity"/>
    <property type="evidence" value="ECO:0007669"/>
    <property type="project" value="UniProtKB-EC"/>
</dbReference>
<dbReference type="GO" id="GO:0032259">
    <property type="term" value="P:methylation"/>
    <property type="evidence" value="ECO:0007669"/>
    <property type="project" value="UniProtKB-KW"/>
</dbReference>
<dbReference type="GO" id="GO:0008033">
    <property type="term" value="P:tRNA processing"/>
    <property type="evidence" value="ECO:0007669"/>
    <property type="project" value="UniProtKB-KW"/>
</dbReference>
<dbReference type="Gene3D" id="3.30.9.10">
    <property type="entry name" value="D-Amino Acid Oxidase, subunit A, domain 2"/>
    <property type="match status" value="1"/>
</dbReference>
<dbReference type="Gene3D" id="3.50.50.60">
    <property type="entry name" value="FAD/NAD(P)-binding domain"/>
    <property type="match status" value="2"/>
</dbReference>
<dbReference type="Gene3D" id="3.40.50.150">
    <property type="entry name" value="Vaccinia Virus protein VP39"/>
    <property type="match status" value="1"/>
</dbReference>
<dbReference type="InterPro" id="IPR006076">
    <property type="entry name" value="FAD-dep_OxRdtase"/>
</dbReference>
<dbReference type="InterPro" id="IPR036188">
    <property type="entry name" value="FAD/NAD-bd_sf"/>
</dbReference>
<dbReference type="InterPro" id="IPR008471">
    <property type="entry name" value="MnmC-like_methylTransf"/>
</dbReference>
<dbReference type="InterPro" id="IPR029063">
    <property type="entry name" value="SAM-dependent_MTases_sf"/>
</dbReference>
<dbReference type="PANTHER" id="PTHR13847">
    <property type="entry name" value="SARCOSINE DEHYDROGENASE-RELATED"/>
    <property type="match status" value="1"/>
</dbReference>
<dbReference type="PANTHER" id="PTHR13847:SF283">
    <property type="entry name" value="TRNA 5-METHYLAMINOMETHYL-2-THIOURIDINE BIOSYNTHESIS BIFUNCTIONAL PROTEIN MNMC"/>
    <property type="match status" value="1"/>
</dbReference>
<dbReference type="Pfam" id="PF01266">
    <property type="entry name" value="DAO"/>
    <property type="match status" value="2"/>
</dbReference>
<dbReference type="Pfam" id="PF05430">
    <property type="entry name" value="Methyltransf_30"/>
    <property type="match status" value="1"/>
</dbReference>
<dbReference type="SUPFAM" id="SSF51905">
    <property type="entry name" value="FAD/NAD(P)-binding domain"/>
    <property type="match status" value="1"/>
</dbReference>
<protein>
    <recommendedName>
        <fullName>tRNA 5-methylaminomethyl-2-thiouridine biosynthesis bifunctional protein MnmC</fullName>
        <shortName>tRNA mnm(5)s(2)U biosynthesis bifunctional protein</shortName>
    </recommendedName>
    <domain>
        <recommendedName>
            <fullName>tRNA (mnm(5)s(2)U34)-methyltransferase</fullName>
            <ecNumber>2.1.1.61</ecNumber>
        </recommendedName>
    </domain>
    <domain>
        <recommendedName>
            <fullName>FAD-dependent cmnm(5)s(2)U34 oxidoreductase</fullName>
            <ecNumber>1.5.-.-</ecNumber>
        </recommendedName>
    </domain>
</protein>
<keyword id="KW-0963">Cytoplasm</keyword>
<keyword id="KW-0274">FAD</keyword>
<keyword id="KW-0285">Flavoprotein</keyword>
<keyword id="KW-0489">Methyltransferase</keyword>
<keyword id="KW-0511">Multifunctional enzyme</keyword>
<keyword id="KW-0560">Oxidoreductase</keyword>
<keyword id="KW-1185">Reference proteome</keyword>
<keyword id="KW-0949">S-adenosyl-L-methionine</keyword>
<keyword id="KW-0808">Transferase</keyword>
<keyword id="KW-0819">tRNA processing</keyword>